<feature type="chain" id="PRO_0000211369" description="Putative UPF0320 protein YDR543C">
    <location>
        <begin position="1"/>
        <end position="99"/>
    </location>
</feature>
<feature type="region of interest" description="Disordered" evidence="1">
    <location>
        <begin position="80"/>
        <end position="99"/>
    </location>
</feature>
<evidence type="ECO:0000256" key="1">
    <source>
        <dbReference type="SAM" id="MobiDB-lite"/>
    </source>
</evidence>
<evidence type="ECO:0000305" key="2"/>
<evidence type="ECO:0000305" key="3">
    <source>
    </source>
</evidence>
<comment type="miscellaneous">
    <text evidence="2">Contained within a telomeric X element core sequence.</text>
</comment>
<comment type="similarity">
    <text evidence="2">Belongs to the UPF0320 family.</text>
</comment>
<comment type="caution">
    <text evidence="3">Product of a dubious gene prediction unlikely to encode a functional protein. Because of that it is not part of the S.cerevisiae S288c complete/reference proteome set.</text>
</comment>
<sequence length="99" mass="11349">MAHLSLNQYKCTHIIIHGTCLSGLYPVPFTHNAHDYPHFNIYISFGGPKYCKTALNTYVIPLLHRILTTQFIYTYANITEKSPPKSPKHKNILSFNNNT</sequence>
<reference key="1">
    <citation type="journal article" date="1997" name="Nature">
        <title>The nucleotide sequence of Saccharomyces cerevisiae chromosome IV.</title>
        <authorList>
            <person name="Jacq C."/>
            <person name="Alt-Moerbe J."/>
            <person name="Andre B."/>
            <person name="Arnold W."/>
            <person name="Bahr A."/>
            <person name="Ballesta J.P.G."/>
            <person name="Bargues M."/>
            <person name="Baron L."/>
            <person name="Becker A."/>
            <person name="Biteau N."/>
            <person name="Bloecker H."/>
            <person name="Blugeon C."/>
            <person name="Boskovic J."/>
            <person name="Brandt P."/>
            <person name="Brueckner M."/>
            <person name="Buitrago M.J."/>
            <person name="Coster F."/>
            <person name="Delaveau T."/>
            <person name="del Rey F."/>
            <person name="Dujon B."/>
            <person name="Eide L.G."/>
            <person name="Garcia-Cantalejo J.M."/>
            <person name="Goffeau A."/>
            <person name="Gomez-Peris A."/>
            <person name="Granotier C."/>
            <person name="Hanemann V."/>
            <person name="Hankeln T."/>
            <person name="Hoheisel J.D."/>
            <person name="Jaeger W."/>
            <person name="Jimenez A."/>
            <person name="Jonniaux J.-L."/>
            <person name="Kraemer C."/>
            <person name="Kuester H."/>
            <person name="Laamanen P."/>
            <person name="Legros Y."/>
            <person name="Louis E.J."/>
            <person name="Moeller-Rieker S."/>
            <person name="Monnet A."/>
            <person name="Moro M."/>
            <person name="Mueller-Auer S."/>
            <person name="Nussbaumer B."/>
            <person name="Paricio N."/>
            <person name="Paulin L."/>
            <person name="Perea J."/>
            <person name="Perez-Alonso M."/>
            <person name="Perez-Ortin J.E."/>
            <person name="Pohl T.M."/>
            <person name="Prydz H."/>
            <person name="Purnelle B."/>
            <person name="Rasmussen S.W."/>
            <person name="Remacha M.A."/>
            <person name="Revuelta J.L."/>
            <person name="Rieger M."/>
            <person name="Salom D."/>
            <person name="Saluz H.P."/>
            <person name="Saiz J.E."/>
            <person name="Saren A.-M."/>
            <person name="Schaefer M."/>
            <person name="Scharfe M."/>
            <person name="Schmidt E.R."/>
            <person name="Schneider C."/>
            <person name="Scholler P."/>
            <person name="Schwarz S."/>
            <person name="Soler-Mira A."/>
            <person name="Urrestarazu L.A."/>
            <person name="Verhasselt P."/>
            <person name="Vissers S."/>
            <person name="Voet M."/>
            <person name="Volckaert G."/>
            <person name="Wagner G."/>
            <person name="Wambutt R."/>
            <person name="Wedler E."/>
            <person name="Wedler H."/>
            <person name="Woelfl S."/>
            <person name="Harris D.E."/>
            <person name="Bowman S."/>
            <person name="Brown D."/>
            <person name="Churcher C.M."/>
            <person name="Connor R."/>
            <person name="Dedman K."/>
            <person name="Gentles S."/>
            <person name="Hamlin N."/>
            <person name="Hunt S."/>
            <person name="Jones L."/>
            <person name="McDonald S."/>
            <person name="Murphy L.D."/>
            <person name="Niblett D."/>
            <person name="Odell C."/>
            <person name="Oliver K."/>
            <person name="Rajandream M.A."/>
            <person name="Richards C."/>
            <person name="Shore L."/>
            <person name="Walsh S.V."/>
            <person name="Barrell B.G."/>
            <person name="Dietrich F.S."/>
            <person name="Mulligan J.T."/>
            <person name="Allen E."/>
            <person name="Araujo R."/>
            <person name="Aviles E."/>
            <person name="Berno A."/>
            <person name="Carpenter J."/>
            <person name="Chen E."/>
            <person name="Cherry J.M."/>
            <person name="Chung E."/>
            <person name="Duncan M."/>
            <person name="Hunicke-Smith S."/>
            <person name="Hyman R.W."/>
            <person name="Komp C."/>
            <person name="Lashkari D."/>
            <person name="Lew H."/>
            <person name="Lin D."/>
            <person name="Mosedale D."/>
            <person name="Nakahara K."/>
            <person name="Namath A."/>
            <person name="Oefner P."/>
            <person name="Oh C."/>
            <person name="Petel F.X."/>
            <person name="Roberts D."/>
            <person name="Schramm S."/>
            <person name="Schroeder M."/>
            <person name="Shogren T."/>
            <person name="Shroff N."/>
            <person name="Winant A."/>
            <person name="Yelton M.A."/>
            <person name="Botstein D."/>
            <person name="Davis R.W."/>
            <person name="Johnston M."/>
            <person name="Andrews S."/>
            <person name="Brinkman R."/>
            <person name="Cooper J."/>
            <person name="Ding H."/>
            <person name="Du Z."/>
            <person name="Favello A."/>
            <person name="Fulton L."/>
            <person name="Gattung S."/>
            <person name="Greco T."/>
            <person name="Hallsworth K."/>
            <person name="Hawkins J."/>
            <person name="Hillier L.W."/>
            <person name="Jier M."/>
            <person name="Johnson D."/>
            <person name="Johnston L."/>
            <person name="Kirsten J."/>
            <person name="Kucaba T."/>
            <person name="Langston Y."/>
            <person name="Latreille P."/>
            <person name="Le T."/>
            <person name="Mardis E."/>
            <person name="Menezes S."/>
            <person name="Miller N."/>
            <person name="Nhan M."/>
            <person name="Pauley A."/>
            <person name="Peluso D."/>
            <person name="Rifkin L."/>
            <person name="Riles L."/>
            <person name="Taich A."/>
            <person name="Trevaskis E."/>
            <person name="Vignati D."/>
            <person name="Wilcox L."/>
            <person name="Wohldman P."/>
            <person name="Vaudin M."/>
            <person name="Wilson R."/>
            <person name="Waterston R."/>
            <person name="Albermann K."/>
            <person name="Hani J."/>
            <person name="Heumann K."/>
            <person name="Kleine K."/>
            <person name="Mewes H.-W."/>
            <person name="Zollner A."/>
            <person name="Zaccaria P."/>
        </authorList>
    </citation>
    <scope>NUCLEOTIDE SEQUENCE [LARGE SCALE GENOMIC DNA]</scope>
    <source>
        <strain>ATCC 204508 / S288c</strain>
    </source>
</reference>
<reference key="2">
    <citation type="journal article" date="2014" name="G3 (Bethesda)">
        <title>The reference genome sequence of Saccharomyces cerevisiae: Then and now.</title>
        <authorList>
            <person name="Engel S.R."/>
            <person name="Dietrich F.S."/>
            <person name="Fisk D.G."/>
            <person name="Binkley G."/>
            <person name="Balakrishnan R."/>
            <person name="Costanzo M.C."/>
            <person name="Dwight S.S."/>
            <person name="Hitz B.C."/>
            <person name="Karra K."/>
            <person name="Nash R.S."/>
            <person name="Weng S."/>
            <person name="Wong E.D."/>
            <person name="Lloyd P."/>
            <person name="Skrzypek M.S."/>
            <person name="Miyasato S.R."/>
            <person name="Simison M."/>
            <person name="Cherry J.M."/>
        </authorList>
    </citation>
    <scope>GENOME REANNOTATION</scope>
    <source>
        <strain>ATCC 204508 / S288c</strain>
    </source>
</reference>
<protein>
    <recommendedName>
        <fullName>Putative UPF0320 protein YDR543C</fullName>
    </recommendedName>
</protein>
<accession>Q03051</accession>
<name>YD543_YEAST</name>
<organism>
    <name type="scientific">Saccharomyces cerevisiae (strain ATCC 204508 / S288c)</name>
    <name type="common">Baker's yeast</name>
    <dbReference type="NCBI Taxonomy" id="559292"/>
    <lineage>
        <taxon>Eukaryota</taxon>
        <taxon>Fungi</taxon>
        <taxon>Dikarya</taxon>
        <taxon>Ascomycota</taxon>
        <taxon>Saccharomycotina</taxon>
        <taxon>Saccharomycetes</taxon>
        <taxon>Saccharomycetales</taxon>
        <taxon>Saccharomycetaceae</taxon>
        <taxon>Saccharomyces</taxon>
    </lineage>
</organism>
<gene>
    <name type="ordered locus">YDR543C</name>
    <name type="ORF">D3703.6</name>
</gene>
<dbReference type="EMBL" id="U43834">
    <property type="protein sequence ID" value="AAB64985.1"/>
    <property type="molecule type" value="Genomic_DNA"/>
</dbReference>
<dbReference type="PIR" id="S62022">
    <property type="entry name" value="S62022"/>
</dbReference>
<dbReference type="PIR" id="S71162">
    <property type="entry name" value="S71162"/>
</dbReference>
<dbReference type="IntAct" id="Q03051">
    <property type="interactions" value="1"/>
</dbReference>
<dbReference type="STRING" id="4932.YDR543C"/>
<dbReference type="PaxDb" id="4932-YDR543C"/>
<dbReference type="EnsemblFungi" id="YDR543C_mRNA">
    <property type="protein sequence ID" value="YDR543C"/>
    <property type="gene ID" value="YDR543C"/>
</dbReference>
<dbReference type="AGR" id="SGD:S000002951"/>
<dbReference type="SGD" id="S000002951">
    <property type="gene designation" value="YDR543C"/>
</dbReference>
<dbReference type="GeneTree" id="ENSGT00940000177535"/>
<dbReference type="HOGENOM" id="CLU_164954_0_0_1"/>
<dbReference type="InterPro" id="IPR007414">
    <property type="entry name" value="DUF468"/>
</dbReference>
<dbReference type="Pfam" id="PF04318">
    <property type="entry name" value="DUF468"/>
    <property type="match status" value="1"/>
</dbReference>
<proteinExistence type="uncertain"/>